<protein>
    <recommendedName>
        <fullName>SPbeta prophage-derived uncharacterized protein YonU</fullName>
    </recommendedName>
</protein>
<organism>
    <name type="scientific">Bacillus subtilis (strain 168)</name>
    <dbReference type="NCBI Taxonomy" id="224308"/>
    <lineage>
        <taxon>Bacteria</taxon>
        <taxon>Bacillati</taxon>
        <taxon>Bacillota</taxon>
        <taxon>Bacilli</taxon>
        <taxon>Bacillales</taxon>
        <taxon>Bacillaceae</taxon>
        <taxon>Bacillus</taxon>
    </lineage>
</organism>
<feature type="chain" id="PRO_0000360456" description="SPbeta prophage-derived uncharacterized protein YonU">
    <location>
        <begin position="1"/>
        <end position="62"/>
    </location>
</feature>
<feature type="coiled-coil region" evidence="1">
    <location>
        <begin position="1"/>
        <end position="32"/>
    </location>
</feature>
<reference key="1">
    <citation type="journal article" date="1997" name="Nature">
        <title>The complete genome sequence of the Gram-positive bacterium Bacillus subtilis.</title>
        <authorList>
            <person name="Kunst F."/>
            <person name="Ogasawara N."/>
            <person name="Moszer I."/>
            <person name="Albertini A.M."/>
            <person name="Alloni G."/>
            <person name="Azevedo V."/>
            <person name="Bertero M.G."/>
            <person name="Bessieres P."/>
            <person name="Bolotin A."/>
            <person name="Borchert S."/>
            <person name="Borriss R."/>
            <person name="Boursier L."/>
            <person name="Brans A."/>
            <person name="Braun M."/>
            <person name="Brignell S.C."/>
            <person name="Bron S."/>
            <person name="Brouillet S."/>
            <person name="Bruschi C.V."/>
            <person name="Caldwell B."/>
            <person name="Capuano V."/>
            <person name="Carter N.M."/>
            <person name="Choi S.-K."/>
            <person name="Codani J.-J."/>
            <person name="Connerton I.F."/>
            <person name="Cummings N.J."/>
            <person name="Daniel R.A."/>
            <person name="Denizot F."/>
            <person name="Devine K.M."/>
            <person name="Duesterhoeft A."/>
            <person name="Ehrlich S.D."/>
            <person name="Emmerson P.T."/>
            <person name="Entian K.-D."/>
            <person name="Errington J."/>
            <person name="Fabret C."/>
            <person name="Ferrari E."/>
            <person name="Foulger D."/>
            <person name="Fritz C."/>
            <person name="Fujita M."/>
            <person name="Fujita Y."/>
            <person name="Fuma S."/>
            <person name="Galizzi A."/>
            <person name="Galleron N."/>
            <person name="Ghim S.-Y."/>
            <person name="Glaser P."/>
            <person name="Goffeau A."/>
            <person name="Golightly E.J."/>
            <person name="Grandi G."/>
            <person name="Guiseppi G."/>
            <person name="Guy B.J."/>
            <person name="Haga K."/>
            <person name="Haiech J."/>
            <person name="Harwood C.R."/>
            <person name="Henaut A."/>
            <person name="Hilbert H."/>
            <person name="Holsappel S."/>
            <person name="Hosono S."/>
            <person name="Hullo M.-F."/>
            <person name="Itaya M."/>
            <person name="Jones L.-M."/>
            <person name="Joris B."/>
            <person name="Karamata D."/>
            <person name="Kasahara Y."/>
            <person name="Klaerr-Blanchard M."/>
            <person name="Klein C."/>
            <person name="Kobayashi Y."/>
            <person name="Koetter P."/>
            <person name="Koningstein G."/>
            <person name="Krogh S."/>
            <person name="Kumano M."/>
            <person name="Kurita K."/>
            <person name="Lapidus A."/>
            <person name="Lardinois S."/>
            <person name="Lauber J."/>
            <person name="Lazarevic V."/>
            <person name="Lee S.-M."/>
            <person name="Levine A."/>
            <person name="Liu H."/>
            <person name="Masuda S."/>
            <person name="Mauel C."/>
            <person name="Medigue C."/>
            <person name="Medina N."/>
            <person name="Mellado R.P."/>
            <person name="Mizuno M."/>
            <person name="Moestl D."/>
            <person name="Nakai S."/>
            <person name="Noback M."/>
            <person name="Noone D."/>
            <person name="O'Reilly M."/>
            <person name="Ogawa K."/>
            <person name="Ogiwara A."/>
            <person name="Oudega B."/>
            <person name="Park S.-H."/>
            <person name="Parro V."/>
            <person name="Pohl T.M."/>
            <person name="Portetelle D."/>
            <person name="Porwollik S."/>
            <person name="Prescott A.M."/>
            <person name="Presecan E."/>
            <person name="Pujic P."/>
            <person name="Purnelle B."/>
            <person name="Rapoport G."/>
            <person name="Rey M."/>
            <person name="Reynolds S."/>
            <person name="Rieger M."/>
            <person name="Rivolta C."/>
            <person name="Rocha E."/>
            <person name="Roche B."/>
            <person name="Rose M."/>
            <person name="Sadaie Y."/>
            <person name="Sato T."/>
            <person name="Scanlan E."/>
            <person name="Schleich S."/>
            <person name="Schroeter R."/>
            <person name="Scoffone F."/>
            <person name="Sekiguchi J."/>
            <person name="Sekowska A."/>
            <person name="Seror S.J."/>
            <person name="Serror P."/>
            <person name="Shin B.-S."/>
            <person name="Soldo B."/>
            <person name="Sorokin A."/>
            <person name="Tacconi E."/>
            <person name="Takagi T."/>
            <person name="Takahashi H."/>
            <person name="Takemaru K."/>
            <person name="Takeuchi M."/>
            <person name="Tamakoshi A."/>
            <person name="Tanaka T."/>
            <person name="Terpstra P."/>
            <person name="Tognoni A."/>
            <person name="Tosato V."/>
            <person name="Uchiyama S."/>
            <person name="Vandenbol M."/>
            <person name="Vannier F."/>
            <person name="Vassarotti A."/>
            <person name="Viari A."/>
            <person name="Wambutt R."/>
            <person name="Wedler E."/>
            <person name="Wedler H."/>
            <person name="Weitzenegger T."/>
            <person name="Winters P."/>
            <person name="Wipat A."/>
            <person name="Yamamoto H."/>
            <person name="Yamane K."/>
            <person name="Yasumoto K."/>
            <person name="Yata K."/>
            <person name="Yoshida K."/>
            <person name="Yoshikawa H.-F."/>
            <person name="Zumstein E."/>
            <person name="Yoshikawa H."/>
            <person name="Danchin A."/>
        </authorList>
    </citation>
    <scope>NUCLEOTIDE SEQUENCE [LARGE SCALE GENOMIC DNA]</scope>
    <source>
        <strain>168</strain>
    </source>
</reference>
<dbReference type="EMBL" id="AL009126">
    <property type="protein sequence ID" value="CAB14017.1"/>
    <property type="molecule type" value="Genomic_DNA"/>
</dbReference>
<dbReference type="RefSeq" id="NP_389982.1">
    <property type="nucleotide sequence ID" value="NC_000964.3"/>
</dbReference>
<dbReference type="RefSeq" id="WP_004399547.1">
    <property type="nucleotide sequence ID" value="NZ_OZ025638.1"/>
</dbReference>
<dbReference type="SMR" id="O31940"/>
<dbReference type="FunCoup" id="O31940">
    <property type="interactions" value="3"/>
</dbReference>
<dbReference type="STRING" id="224308.BSU20990"/>
<dbReference type="PaxDb" id="224308-BSU20990"/>
<dbReference type="EnsemblBacteria" id="CAB14017">
    <property type="protein sequence ID" value="CAB14017"/>
    <property type="gene ID" value="BSU_20990"/>
</dbReference>
<dbReference type="GeneID" id="939176"/>
<dbReference type="KEGG" id="bsu:BSU20990"/>
<dbReference type="PATRIC" id="fig|224308.179.peg.2291"/>
<dbReference type="InParanoid" id="O31940"/>
<dbReference type="OrthoDB" id="9879070at2"/>
<dbReference type="BioCyc" id="BSUB:BSU20990-MONOMER"/>
<dbReference type="Proteomes" id="UP000001570">
    <property type="component" value="Chromosome"/>
</dbReference>
<accession>O31940</accession>
<evidence type="ECO:0000255" key="1"/>
<gene>
    <name type="primary">yonU</name>
    <name type="ordered locus">BSU20990</name>
</gene>
<name>YONU_BACSU</name>
<sequence>MEKKFLDAIQQLTKELEMLKKDIDSIKEATVRIDKDLLEYREEISKVKQDDSVLIMQQHKDN</sequence>
<keyword id="KW-0175">Coiled coil</keyword>
<keyword id="KW-1185">Reference proteome</keyword>
<proteinExistence type="predicted"/>